<name>MOT11_MOUSE</name>
<keyword id="KW-1003">Cell membrane</keyword>
<keyword id="KW-0256">Endoplasmic reticulum</keyword>
<keyword id="KW-0443">Lipid metabolism</keyword>
<keyword id="KW-0472">Membrane</keyword>
<keyword id="KW-1185">Reference proteome</keyword>
<keyword id="KW-0769">Symport</keyword>
<keyword id="KW-0812">Transmembrane</keyword>
<keyword id="KW-1133">Transmembrane helix</keyword>
<keyword id="KW-0813">Transport</keyword>
<gene>
    <name type="primary">Slc16a11</name>
    <name type="synonym">Mct11</name>
</gene>
<feature type="chain" id="PRO_0000286674" description="Monocarboxylate transporter 11">
    <location>
        <begin position="1"/>
        <end position="447"/>
    </location>
</feature>
<feature type="topological domain" description="Cytoplasmic" evidence="3">
    <location>
        <begin position="1"/>
        <end position="11"/>
    </location>
</feature>
<feature type="transmembrane region" description="Helical" evidence="2">
    <location>
        <begin position="12"/>
        <end position="32"/>
    </location>
</feature>
<feature type="transmembrane region" description="Helical" evidence="2">
    <location>
        <begin position="54"/>
        <end position="74"/>
    </location>
</feature>
<feature type="transmembrane region" description="Helical" evidence="2">
    <location>
        <begin position="80"/>
        <end position="100"/>
    </location>
</feature>
<feature type="transmembrane region" description="Helical" evidence="2">
    <location>
        <begin position="107"/>
        <end position="127"/>
    </location>
</feature>
<feature type="transmembrane region" description="Helical" evidence="2">
    <location>
        <begin position="139"/>
        <end position="159"/>
    </location>
</feature>
<feature type="transmembrane region" description="Helical" evidence="2">
    <location>
        <begin position="162"/>
        <end position="182"/>
    </location>
</feature>
<feature type="transmembrane region" description="Helical" evidence="2">
    <location>
        <begin position="219"/>
        <end position="239"/>
    </location>
</feature>
<feature type="transmembrane region" description="Helical" evidence="2">
    <location>
        <begin position="249"/>
        <end position="269"/>
    </location>
</feature>
<feature type="transmembrane region" description="Helical" evidence="2">
    <location>
        <begin position="288"/>
        <end position="308"/>
    </location>
</feature>
<feature type="transmembrane region" description="Helical" evidence="2">
    <location>
        <begin position="330"/>
        <end position="350"/>
    </location>
</feature>
<feature type="transmembrane region" description="Helical" evidence="2">
    <location>
        <begin position="354"/>
        <end position="374"/>
    </location>
</feature>
<feature type="transmembrane region" description="Helical" evidence="2">
    <location>
        <begin position="383"/>
        <end position="403"/>
    </location>
</feature>
<feature type="topological domain" description="Cytoplasmic" evidence="3">
    <location>
        <begin position="404"/>
        <end position="447"/>
    </location>
</feature>
<proteinExistence type="evidence at transcript level"/>
<protein>
    <recommendedName>
        <fullName>Monocarboxylate transporter 11</fullName>
        <shortName>MCT 11</shortName>
    </recommendedName>
    <alternativeName>
        <fullName>Solute carrier family 16 member 11</fullName>
    </alternativeName>
</protein>
<reference key="1">
    <citation type="journal article" date="2009" name="PLoS Biol.">
        <title>Lineage-specific biology revealed by a finished genome assembly of the mouse.</title>
        <authorList>
            <person name="Church D.M."/>
            <person name="Goodstadt L."/>
            <person name="Hillier L.W."/>
            <person name="Zody M.C."/>
            <person name="Goldstein S."/>
            <person name="She X."/>
            <person name="Bult C.J."/>
            <person name="Agarwala R."/>
            <person name="Cherry J.L."/>
            <person name="DiCuccio M."/>
            <person name="Hlavina W."/>
            <person name="Kapustin Y."/>
            <person name="Meric P."/>
            <person name="Maglott D."/>
            <person name="Birtle Z."/>
            <person name="Marques A.C."/>
            <person name="Graves T."/>
            <person name="Zhou S."/>
            <person name="Teague B."/>
            <person name="Potamousis K."/>
            <person name="Churas C."/>
            <person name="Place M."/>
            <person name="Herschleb J."/>
            <person name="Runnheim R."/>
            <person name="Forrest D."/>
            <person name="Amos-Landgraf J."/>
            <person name="Schwartz D.C."/>
            <person name="Cheng Z."/>
            <person name="Lindblad-Toh K."/>
            <person name="Eichler E.E."/>
            <person name="Ponting C.P."/>
        </authorList>
    </citation>
    <scope>NUCLEOTIDE SEQUENCE [LARGE SCALE GENOMIC DNA]</scope>
    <source>
        <strain>C57BL/6J</strain>
    </source>
</reference>
<reference key="2">
    <citation type="journal article" date="2004" name="Genome Res.">
        <title>The status, quality, and expansion of the NIH full-length cDNA project: the Mammalian Gene Collection (MGC).</title>
        <authorList>
            <consortium name="The MGC Project Team"/>
        </authorList>
    </citation>
    <scope>NUCLEOTIDE SEQUENCE [LARGE SCALE MRNA] OF 46-421</scope>
</reference>
<evidence type="ECO:0000250" key="1">
    <source>
        <dbReference type="UniProtKB" id="Q8NCK7"/>
    </source>
</evidence>
<evidence type="ECO:0000255" key="2"/>
<evidence type="ECO:0000305" key="3"/>
<comment type="function">
    <text evidence="1">Proton-linked monocarboxylate transporter. It catalyzes the transport of pyruvate across the plasma membrane. Probably involved in hepatic lipid metabolism: overexpression results in an increase of triacylglycerol(TAG) levels, small increases in intracellular diacylglycerols and decreases in lysophosphatidylcholine, cholesterol ester and sphingomyelin lipids.</text>
</comment>
<comment type="catalytic activity">
    <reaction evidence="1">
        <text>pyruvate(out) + H(+)(out) = pyruvate(in) + H(+)(in)</text>
        <dbReference type="Rhea" id="RHEA:64720"/>
        <dbReference type="ChEBI" id="CHEBI:15361"/>
        <dbReference type="ChEBI" id="CHEBI:15378"/>
    </reaction>
</comment>
<comment type="subunit">
    <text evidence="1">Interacts with isoform 2 of BSG.</text>
</comment>
<comment type="subcellular location">
    <subcellularLocation>
        <location evidence="1">Endoplasmic reticulum membrane</location>
        <topology evidence="2">Multi-pass membrane protein</topology>
    </subcellularLocation>
    <subcellularLocation>
        <location evidence="1">Cell membrane</location>
        <topology evidence="2">Multi-pass membrane protein</topology>
    </subcellularLocation>
</comment>
<comment type="similarity">
    <text evidence="3">Belongs to the major facilitator superfamily. Monocarboxylate porter (TC 2.A.1.13) family.</text>
</comment>
<comment type="sequence caution" evidence="3">
    <conflict type="erroneous initiation">
        <sequence resource="EMBL-CDS" id="AAI30256"/>
    </conflict>
</comment>
<comment type="sequence caution" evidence="3">
    <conflict type="erroneous gene model prediction">
        <sequence resource="EMBL-CDS" id="CAI35219"/>
    </conflict>
</comment>
<comment type="sequence caution" evidence="3">
    <conflict type="erroneous gene model prediction">
        <sequence resource="EMBL-CDS" id="CAM28086"/>
    </conflict>
</comment>
<accession>Q5NC32</accession>
<accession>A2BDD4</accession>
<accession>Q5NC33</accession>
<dbReference type="EMBL" id="AL669869">
    <property type="protein sequence ID" value="CAI35219.2"/>
    <property type="status" value="ALT_SEQ"/>
    <property type="molecule type" value="Genomic_DNA"/>
</dbReference>
<dbReference type="EMBL" id="AL669869">
    <property type="protein sequence ID" value="CAI35220.1"/>
    <property type="molecule type" value="Genomic_DNA"/>
</dbReference>
<dbReference type="EMBL" id="CR933731">
    <property type="protein sequence ID" value="CAM28086.1"/>
    <property type="status" value="ALT_SEQ"/>
    <property type="molecule type" value="Genomic_DNA"/>
</dbReference>
<dbReference type="EMBL" id="CR933731">
    <property type="protein sequence ID" value="CAM28087.1"/>
    <property type="molecule type" value="Genomic_DNA"/>
</dbReference>
<dbReference type="EMBL" id="BC130255">
    <property type="protein sequence ID" value="AAI30256.1"/>
    <property type="status" value="ALT_INIT"/>
    <property type="molecule type" value="mRNA"/>
</dbReference>
<dbReference type="RefSeq" id="NP_001402991.1">
    <property type="nucleotide sequence ID" value="NM_001416062.1"/>
</dbReference>
<dbReference type="RefSeq" id="NP_001402992.1">
    <property type="nucleotide sequence ID" value="NM_001416063.1"/>
</dbReference>
<dbReference type="RefSeq" id="NP_694721.2">
    <property type="nucleotide sequence ID" value="NM_153081.4"/>
</dbReference>
<dbReference type="RefSeq" id="XP_006532979.1">
    <property type="nucleotide sequence ID" value="XM_006532916.2"/>
</dbReference>
<dbReference type="RefSeq" id="XP_011247226.1">
    <property type="nucleotide sequence ID" value="XM_011248924.2"/>
</dbReference>
<dbReference type="SMR" id="Q5NC32"/>
<dbReference type="FunCoup" id="Q5NC32">
    <property type="interactions" value="146"/>
</dbReference>
<dbReference type="STRING" id="10090.ENSMUSP00000116648"/>
<dbReference type="GlyGen" id="Q5NC32">
    <property type="glycosylation" value="1 site"/>
</dbReference>
<dbReference type="PhosphoSitePlus" id="Q5NC32"/>
<dbReference type="PaxDb" id="10090-ENSMUSP00000116648"/>
<dbReference type="ProteomicsDB" id="291484"/>
<dbReference type="Antibodypedia" id="53202">
    <property type="antibodies" value="99 antibodies from 21 providers"/>
</dbReference>
<dbReference type="DNASU" id="216867"/>
<dbReference type="Ensembl" id="ENSMUST00000094055.10">
    <property type="protein sequence ID" value="ENSMUSP00000091597.4"/>
    <property type="gene ID" value="ENSMUSG00000040938.17"/>
</dbReference>
<dbReference type="Ensembl" id="ENSMUST00000126388.8">
    <property type="protein sequence ID" value="ENSMUSP00000116648.2"/>
    <property type="gene ID" value="ENSMUSG00000040938.17"/>
</dbReference>
<dbReference type="Ensembl" id="ENSMUST00000171032.8">
    <property type="protein sequence ID" value="ENSMUSP00000128419.2"/>
    <property type="gene ID" value="ENSMUSG00000040938.17"/>
</dbReference>
<dbReference type="GeneID" id="216867"/>
<dbReference type="KEGG" id="mmu:216867"/>
<dbReference type="UCSC" id="uc007jua.2">
    <property type="organism name" value="mouse"/>
</dbReference>
<dbReference type="AGR" id="MGI:2663709"/>
<dbReference type="CTD" id="162515"/>
<dbReference type="MGI" id="MGI:2663709">
    <property type="gene designation" value="Slc16a11"/>
</dbReference>
<dbReference type="VEuPathDB" id="HostDB:ENSMUSG00000040938"/>
<dbReference type="eggNOG" id="KOG2504">
    <property type="taxonomic scope" value="Eukaryota"/>
</dbReference>
<dbReference type="GeneTree" id="ENSGT00940000162017"/>
<dbReference type="HOGENOM" id="CLU_001265_59_1_1"/>
<dbReference type="InParanoid" id="Q5NC32"/>
<dbReference type="OMA" id="LFMWGMF"/>
<dbReference type="OrthoDB" id="2213137at2759"/>
<dbReference type="PhylomeDB" id="Q5NC32"/>
<dbReference type="TreeFam" id="TF313792"/>
<dbReference type="BioGRID-ORCS" id="216867">
    <property type="hits" value="0 hits in 70 CRISPR screens"/>
</dbReference>
<dbReference type="ChiTaRS" id="Slc16a11">
    <property type="organism name" value="mouse"/>
</dbReference>
<dbReference type="PRO" id="PR:Q5NC32"/>
<dbReference type="Proteomes" id="UP000000589">
    <property type="component" value="Chromosome 11"/>
</dbReference>
<dbReference type="RNAct" id="Q5NC32">
    <property type="molecule type" value="protein"/>
</dbReference>
<dbReference type="Bgee" id="ENSMUSG00000040938">
    <property type="expression patterns" value="Expressed in cerebellar cortex and 88 other cell types or tissues"/>
</dbReference>
<dbReference type="ExpressionAtlas" id="Q5NC32">
    <property type="expression patterns" value="baseline and differential"/>
</dbReference>
<dbReference type="GO" id="GO:0005789">
    <property type="term" value="C:endoplasmic reticulum membrane"/>
    <property type="evidence" value="ECO:0000250"/>
    <property type="project" value="UniProtKB"/>
</dbReference>
<dbReference type="GO" id="GO:0005886">
    <property type="term" value="C:plasma membrane"/>
    <property type="evidence" value="ECO:0000250"/>
    <property type="project" value="UniProtKB"/>
</dbReference>
<dbReference type="GO" id="GO:0050833">
    <property type="term" value="F:pyruvate transmembrane transporter activity"/>
    <property type="evidence" value="ECO:0000250"/>
    <property type="project" value="UniProtKB"/>
</dbReference>
<dbReference type="GO" id="GO:0015293">
    <property type="term" value="F:symporter activity"/>
    <property type="evidence" value="ECO:0007669"/>
    <property type="project" value="UniProtKB-KW"/>
</dbReference>
<dbReference type="GO" id="GO:0006629">
    <property type="term" value="P:lipid metabolic process"/>
    <property type="evidence" value="ECO:0000250"/>
    <property type="project" value="UniProtKB"/>
</dbReference>
<dbReference type="FunFam" id="1.20.1250.20:FF:000187">
    <property type="entry name" value="Solute carrier family 16 member 11"/>
    <property type="match status" value="1"/>
</dbReference>
<dbReference type="Gene3D" id="1.20.1250.20">
    <property type="entry name" value="MFS general substrate transporter like domains"/>
    <property type="match status" value="2"/>
</dbReference>
<dbReference type="InterPro" id="IPR011701">
    <property type="entry name" value="MFS"/>
</dbReference>
<dbReference type="InterPro" id="IPR020846">
    <property type="entry name" value="MFS_dom"/>
</dbReference>
<dbReference type="InterPro" id="IPR036259">
    <property type="entry name" value="MFS_trans_sf"/>
</dbReference>
<dbReference type="InterPro" id="IPR050327">
    <property type="entry name" value="Proton-linked_MCT"/>
</dbReference>
<dbReference type="PANTHER" id="PTHR11360">
    <property type="entry name" value="MONOCARBOXYLATE TRANSPORTER"/>
    <property type="match status" value="1"/>
</dbReference>
<dbReference type="PANTHER" id="PTHR11360:SF80">
    <property type="entry name" value="MONOCARBOXYLATE TRANSPORTER 11"/>
    <property type="match status" value="1"/>
</dbReference>
<dbReference type="Pfam" id="PF07690">
    <property type="entry name" value="MFS_1"/>
    <property type="match status" value="1"/>
</dbReference>
<dbReference type="SUPFAM" id="SSF103473">
    <property type="entry name" value="MFS general substrate transporter"/>
    <property type="match status" value="1"/>
</dbReference>
<dbReference type="PROSITE" id="PS50850">
    <property type="entry name" value="MFS"/>
    <property type="match status" value="1"/>
</dbReference>
<organism>
    <name type="scientific">Mus musculus</name>
    <name type="common">Mouse</name>
    <dbReference type="NCBI Taxonomy" id="10090"/>
    <lineage>
        <taxon>Eukaryota</taxon>
        <taxon>Metazoa</taxon>
        <taxon>Chordata</taxon>
        <taxon>Craniata</taxon>
        <taxon>Vertebrata</taxon>
        <taxon>Euteleostomi</taxon>
        <taxon>Mammalia</taxon>
        <taxon>Eutheria</taxon>
        <taxon>Euarchontoglires</taxon>
        <taxon>Glires</taxon>
        <taxon>Rodentia</taxon>
        <taxon>Myomorpha</taxon>
        <taxon>Muroidea</taxon>
        <taxon>Muridae</taxon>
        <taxon>Murinae</taxon>
        <taxon>Mus</taxon>
        <taxon>Mus</taxon>
    </lineage>
</organism>
<sequence>MTPKPAGPPDGGWGWVVAAAAFAVNGLSYGLLRSLGLALPDLAEHFERSAQDTAWVSALALAVQQAASPVGSALSTRWGARPVVMVGGVLTSLGLVFSAFARSLLHLYLGLGLLAGSGWALVFAPALGTLSRYFSRRRVLAVGLALTGNGASSLLLAPALQFLLDTFGWRGALLLLGAVTLHLTPCGALLRPLALSGDPLAPPRTPLAALGLGLFKRRAFSVFALGTALIGGGYFVPYVHLGPHALDQGMGGYGAALVVAVAAVGDACARLASGWLADQGWVPLPRLLVVFGSLTGLGVLAMGLVPTVGTEEGWGAPLLAAAGAYGLSAGSYAPLVFGVLPGLVGIGGVVQATGLVMMLMSLGGLLGPPLSGFLRDKTGDFSASFLVCSSFILSGSFIYMGLPRALPSCRPASPPATPPPERGELLPVPQVSLLSAGGTGSIRDTTC</sequence>